<sequence>MSLIETVPVNTEHKSVPVHLHSNLSGLSEEIAKLPGVTSVFLITEKSIHSIYSKYLERELSSLPIKTIYIKGGEKSKHINRTGEVYNQLIEYGADRKSLILAFGGGVVGDFAGFIASTYLRGIRFVQIPTTLLACVDSSVGGKVAVNADFGKNMIGSFYQPEFVFAPLSVLSTLPDREWKCGQAEIIKHSLLSGGEYWEKVKTHSFKDLNVDSTILPYLIAESVRFKANVVSSDEKETGLRKILNLGHTTAHAIESVTKYKKYSHGEAVAIGLVTALLLSEQHSELDPVTTKETIESLKNYGLPFQTKLKSKQLAKHMLHDKKNVGGSIRFVLLKSPGSPIFDIPINSEDIILAIHKQKGI</sequence>
<dbReference type="EC" id="4.2.3.4" evidence="1"/>
<dbReference type="EMBL" id="AE016824">
    <property type="protein sequence ID" value="AAS72097.1"/>
    <property type="molecule type" value="Genomic_DNA"/>
</dbReference>
<dbReference type="RefSeq" id="WP_000052388.1">
    <property type="nucleotide sequence ID" value="NC_005824.1"/>
</dbReference>
<dbReference type="SMR" id="Q75FW3"/>
<dbReference type="GeneID" id="61141263"/>
<dbReference type="KEGG" id="lic:LIC_20068"/>
<dbReference type="HOGENOM" id="CLU_001201_0_2_12"/>
<dbReference type="UniPathway" id="UPA00053">
    <property type="reaction ID" value="UER00085"/>
</dbReference>
<dbReference type="Proteomes" id="UP000007037">
    <property type="component" value="Chromosome II"/>
</dbReference>
<dbReference type="GO" id="GO:0005737">
    <property type="term" value="C:cytoplasm"/>
    <property type="evidence" value="ECO:0007669"/>
    <property type="project" value="UniProtKB-SubCell"/>
</dbReference>
<dbReference type="GO" id="GO:0003856">
    <property type="term" value="F:3-dehydroquinate synthase activity"/>
    <property type="evidence" value="ECO:0007669"/>
    <property type="project" value="UniProtKB-UniRule"/>
</dbReference>
<dbReference type="GO" id="GO:0046872">
    <property type="term" value="F:metal ion binding"/>
    <property type="evidence" value="ECO:0007669"/>
    <property type="project" value="UniProtKB-KW"/>
</dbReference>
<dbReference type="GO" id="GO:0000166">
    <property type="term" value="F:nucleotide binding"/>
    <property type="evidence" value="ECO:0007669"/>
    <property type="project" value="UniProtKB-KW"/>
</dbReference>
<dbReference type="GO" id="GO:0008652">
    <property type="term" value="P:amino acid biosynthetic process"/>
    <property type="evidence" value="ECO:0007669"/>
    <property type="project" value="UniProtKB-KW"/>
</dbReference>
<dbReference type="GO" id="GO:0009073">
    <property type="term" value="P:aromatic amino acid family biosynthetic process"/>
    <property type="evidence" value="ECO:0007669"/>
    <property type="project" value="UniProtKB-KW"/>
</dbReference>
<dbReference type="GO" id="GO:0009423">
    <property type="term" value="P:chorismate biosynthetic process"/>
    <property type="evidence" value="ECO:0007669"/>
    <property type="project" value="UniProtKB-UniRule"/>
</dbReference>
<dbReference type="CDD" id="cd08195">
    <property type="entry name" value="DHQS"/>
    <property type="match status" value="1"/>
</dbReference>
<dbReference type="FunFam" id="3.40.50.1970:FF:000007">
    <property type="entry name" value="Pentafunctional AROM polypeptide"/>
    <property type="match status" value="1"/>
</dbReference>
<dbReference type="Gene3D" id="3.40.50.1970">
    <property type="match status" value="1"/>
</dbReference>
<dbReference type="Gene3D" id="1.20.1090.10">
    <property type="entry name" value="Dehydroquinate synthase-like - alpha domain"/>
    <property type="match status" value="1"/>
</dbReference>
<dbReference type="HAMAP" id="MF_00110">
    <property type="entry name" value="DHQ_synthase"/>
    <property type="match status" value="1"/>
</dbReference>
<dbReference type="InterPro" id="IPR050071">
    <property type="entry name" value="Dehydroquinate_synthase"/>
</dbReference>
<dbReference type="InterPro" id="IPR016037">
    <property type="entry name" value="DHQ_synth_AroB"/>
</dbReference>
<dbReference type="InterPro" id="IPR030963">
    <property type="entry name" value="DHQ_synth_fam"/>
</dbReference>
<dbReference type="InterPro" id="IPR030960">
    <property type="entry name" value="DHQS/DOIS_N"/>
</dbReference>
<dbReference type="InterPro" id="IPR056179">
    <property type="entry name" value="DHQS_C"/>
</dbReference>
<dbReference type="NCBIfam" id="TIGR01357">
    <property type="entry name" value="aroB"/>
    <property type="match status" value="1"/>
</dbReference>
<dbReference type="PANTHER" id="PTHR43622">
    <property type="entry name" value="3-DEHYDROQUINATE SYNTHASE"/>
    <property type="match status" value="1"/>
</dbReference>
<dbReference type="PANTHER" id="PTHR43622:SF7">
    <property type="entry name" value="3-DEHYDROQUINATE SYNTHASE, CHLOROPLASTIC"/>
    <property type="match status" value="1"/>
</dbReference>
<dbReference type="Pfam" id="PF01761">
    <property type="entry name" value="DHQ_synthase"/>
    <property type="match status" value="1"/>
</dbReference>
<dbReference type="Pfam" id="PF24621">
    <property type="entry name" value="DHQS_C"/>
    <property type="match status" value="1"/>
</dbReference>
<dbReference type="PIRSF" id="PIRSF001455">
    <property type="entry name" value="DHQ_synth"/>
    <property type="match status" value="1"/>
</dbReference>
<dbReference type="SUPFAM" id="SSF56796">
    <property type="entry name" value="Dehydroquinate synthase-like"/>
    <property type="match status" value="1"/>
</dbReference>
<accession>Q75FW3</accession>
<feature type="chain" id="PRO_0000140750" description="3-dehydroquinate synthase">
    <location>
        <begin position="1"/>
        <end position="361"/>
    </location>
</feature>
<feature type="binding site" evidence="1">
    <location>
        <begin position="106"/>
        <end position="110"/>
    </location>
    <ligand>
        <name>NAD(+)</name>
        <dbReference type="ChEBI" id="CHEBI:57540"/>
    </ligand>
</feature>
<feature type="binding site" evidence="1">
    <location>
        <begin position="130"/>
        <end position="131"/>
    </location>
    <ligand>
        <name>NAD(+)</name>
        <dbReference type="ChEBI" id="CHEBI:57540"/>
    </ligand>
</feature>
<feature type="binding site" evidence="1">
    <location>
        <position position="143"/>
    </location>
    <ligand>
        <name>NAD(+)</name>
        <dbReference type="ChEBI" id="CHEBI:57540"/>
    </ligand>
</feature>
<feature type="binding site" evidence="1">
    <location>
        <position position="152"/>
    </location>
    <ligand>
        <name>NAD(+)</name>
        <dbReference type="ChEBI" id="CHEBI:57540"/>
    </ligand>
</feature>
<feature type="binding site" evidence="1">
    <location>
        <position position="185"/>
    </location>
    <ligand>
        <name>Zn(2+)</name>
        <dbReference type="ChEBI" id="CHEBI:29105"/>
    </ligand>
</feature>
<feature type="binding site" evidence="1">
    <location>
        <position position="248"/>
    </location>
    <ligand>
        <name>Zn(2+)</name>
        <dbReference type="ChEBI" id="CHEBI:29105"/>
    </ligand>
</feature>
<feature type="binding site" evidence="1">
    <location>
        <position position="265"/>
    </location>
    <ligand>
        <name>Zn(2+)</name>
        <dbReference type="ChEBI" id="CHEBI:29105"/>
    </ligand>
</feature>
<reference key="1">
    <citation type="journal article" date="2004" name="J. Bacteriol.">
        <title>Comparative genomics of two Leptospira interrogans serovars reveals novel insights into physiology and pathogenesis.</title>
        <authorList>
            <person name="Nascimento A.L.T.O."/>
            <person name="Ko A.I."/>
            <person name="Martins E.A.L."/>
            <person name="Monteiro-Vitorello C.B."/>
            <person name="Ho P.L."/>
            <person name="Haake D.A."/>
            <person name="Verjovski-Almeida S."/>
            <person name="Hartskeerl R.A."/>
            <person name="Marques M.V."/>
            <person name="Oliveira M.C."/>
            <person name="Menck C.F.M."/>
            <person name="Leite L.C.C."/>
            <person name="Carrer H."/>
            <person name="Coutinho L.L."/>
            <person name="Degrave W.M."/>
            <person name="Dellagostin O.A."/>
            <person name="El-Dorry H."/>
            <person name="Ferro E.S."/>
            <person name="Ferro M.I.T."/>
            <person name="Furlan L.R."/>
            <person name="Gamberini M."/>
            <person name="Giglioti E.A."/>
            <person name="Goes-Neto A."/>
            <person name="Goldman G.H."/>
            <person name="Goldman M.H.S."/>
            <person name="Harakava R."/>
            <person name="Jeronimo S.M.B."/>
            <person name="Junqueira-de-Azevedo I.L.M."/>
            <person name="Kimura E.T."/>
            <person name="Kuramae E.E."/>
            <person name="Lemos E.G.M."/>
            <person name="Lemos M.V.F."/>
            <person name="Marino C.L."/>
            <person name="Nunes L.R."/>
            <person name="de Oliveira R.C."/>
            <person name="Pereira G.G."/>
            <person name="Reis M.S."/>
            <person name="Schriefer A."/>
            <person name="Siqueira W.J."/>
            <person name="Sommer P."/>
            <person name="Tsai S.M."/>
            <person name="Simpson A.J.G."/>
            <person name="Ferro J.A."/>
            <person name="Camargo L.E.A."/>
            <person name="Kitajima J.P."/>
            <person name="Setubal J.C."/>
            <person name="Van Sluys M.A."/>
        </authorList>
    </citation>
    <scope>NUCLEOTIDE SEQUENCE [LARGE SCALE GENOMIC DNA]</scope>
    <source>
        <strain>Fiocruz L1-130</strain>
    </source>
</reference>
<name>AROB_LEPIC</name>
<proteinExistence type="inferred from homology"/>
<keyword id="KW-0028">Amino-acid biosynthesis</keyword>
<keyword id="KW-0057">Aromatic amino acid biosynthesis</keyword>
<keyword id="KW-0170">Cobalt</keyword>
<keyword id="KW-0963">Cytoplasm</keyword>
<keyword id="KW-0456">Lyase</keyword>
<keyword id="KW-0479">Metal-binding</keyword>
<keyword id="KW-0520">NAD</keyword>
<keyword id="KW-0547">Nucleotide-binding</keyword>
<keyword id="KW-0862">Zinc</keyword>
<evidence type="ECO:0000255" key="1">
    <source>
        <dbReference type="HAMAP-Rule" id="MF_00110"/>
    </source>
</evidence>
<gene>
    <name evidence="1" type="primary">aroB</name>
    <name type="ordered locus">LIC_20068</name>
</gene>
<comment type="function">
    <text evidence="1">Catalyzes the conversion of 3-deoxy-D-arabino-heptulosonate 7-phosphate (DAHP) to dehydroquinate (DHQ).</text>
</comment>
<comment type="catalytic activity">
    <reaction evidence="1">
        <text>7-phospho-2-dehydro-3-deoxy-D-arabino-heptonate = 3-dehydroquinate + phosphate</text>
        <dbReference type="Rhea" id="RHEA:21968"/>
        <dbReference type="ChEBI" id="CHEBI:32364"/>
        <dbReference type="ChEBI" id="CHEBI:43474"/>
        <dbReference type="ChEBI" id="CHEBI:58394"/>
        <dbReference type="EC" id="4.2.3.4"/>
    </reaction>
</comment>
<comment type="cofactor">
    <cofactor evidence="1">
        <name>NAD(+)</name>
        <dbReference type="ChEBI" id="CHEBI:57540"/>
    </cofactor>
</comment>
<comment type="cofactor">
    <cofactor evidence="1">
        <name>Co(2+)</name>
        <dbReference type="ChEBI" id="CHEBI:48828"/>
    </cofactor>
    <cofactor evidence="1">
        <name>Zn(2+)</name>
        <dbReference type="ChEBI" id="CHEBI:29105"/>
    </cofactor>
    <text evidence="1">Binds 1 divalent metal cation per subunit. Can use either Co(2+) or Zn(2+).</text>
</comment>
<comment type="pathway">
    <text evidence="1">Metabolic intermediate biosynthesis; chorismate biosynthesis; chorismate from D-erythrose 4-phosphate and phosphoenolpyruvate: step 2/7.</text>
</comment>
<comment type="subcellular location">
    <subcellularLocation>
        <location evidence="1">Cytoplasm</location>
    </subcellularLocation>
</comment>
<comment type="similarity">
    <text evidence="1">Belongs to the sugar phosphate cyclases superfamily. Dehydroquinate synthase family.</text>
</comment>
<protein>
    <recommendedName>
        <fullName evidence="1">3-dehydroquinate synthase</fullName>
        <shortName evidence="1">DHQS</shortName>
        <ecNumber evidence="1">4.2.3.4</ecNumber>
    </recommendedName>
</protein>
<organism>
    <name type="scientific">Leptospira interrogans serogroup Icterohaemorrhagiae serovar copenhageni (strain Fiocruz L1-130)</name>
    <dbReference type="NCBI Taxonomy" id="267671"/>
    <lineage>
        <taxon>Bacteria</taxon>
        <taxon>Pseudomonadati</taxon>
        <taxon>Spirochaetota</taxon>
        <taxon>Spirochaetia</taxon>
        <taxon>Leptospirales</taxon>
        <taxon>Leptospiraceae</taxon>
        <taxon>Leptospira</taxon>
    </lineage>
</organism>